<dbReference type="EC" id="1.1.1.57" evidence="2"/>
<dbReference type="EMBL" id="AE000512">
    <property type="protein sequence ID" value="AAD35162.1"/>
    <property type="molecule type" value="Genomic_DNA"/>
</dbReference>
<dbReference type="EMBL" id="CP004077">
    <property type="protein sequence ID" value="AGL48991.1"/>
    <property type="molecule type" value="Genomic_DNA"/>
</dbReference>
<dbReference type="PIR" id="H72422">
    <property type="entry name" value="H72422"/>
</dbReference>
<dbReference type="RefSeq" id="NP_227884.1">
    <property type="nucleotide sequence ID" value="NC_000853.1"/>
</dbReference>
<dbReference type="RefSeq" id="WP_004082564.1">
    <property type="nucleotide sequence ID" value="NZ_CP011107.1"/>
</dbReference>
<dbReference type="SMR" id="Q9WXS3"/>
<dbReference type="FunCoup" id="Q9WXS3">
    <property type="interactions" value="26"/>
</dbReference>
<dbReference type="STRING" id="243274.TM_0068"/>
<dbReference type="PaxDb" id="243274-THEMA_04465"/>
<dbReference type="EnsemblBacteria" id="AAD35162">
    <property type="protein sequence ID" value="AAD35162"/>
    <property type="gene ID" value="TM_0068"/>
</dbReference>
<dbReference type="KEGG" id="tma:TM0068"/>
<dbReference type="KEGG" id="tmi:THEMA_04465"/>
<dbReference type="KEGG" id="tmm:Tmari_0065"/>
<dbReference type="KEGG" id="tmw:THMA_0064"/>
<dbReference type="PATRIC" id="fig|243274.17.peg.67"/>
<dbReference type="eggNOG" id="COG0246">
    <property type="taxonomic scope" value="Bacteria"/>
</dbReference>
<dbReference type="InParanoid" id="Q9WXS3"/>
<dbReference type="OrthoDB" id="271711at2"/>
<dbReference type="BioCyc" id="MetaCyc:MONOMER-17954"/>
<dbReference type="Proteomes" id="UP000008183">
    <property type="component" value="Chromosome"/>
</dbReference>
<dbReference type="GO" id="GO:0008866">
    <property type="term" value="F:fructuronate reductase activity"/>
    <property type="evidence" value="ECO:0007669"/>
    <property type="project" value="UniProtKB-EC"/>
</dbReference>
<dbReference type="GO" id="GO:0016616">
    <property type="term" value="F:oxidoreductase activity, acting on the CH-OH group of donors, NAD or NADP as acceptor"/>
    <property type="evidence" value="ECO:0000318"/>
    <property type="project" value="GO_Central"/>
</dbReference>
<dbReference type="Gene3D" id="1.10.1040.10">
    <property type="entry name" value="N-(1-d-carboxylethyl)-l-norvaline Dehydrogenase, domain 2"/>
    <property type="match status" value="1"/>
</dbReference>
<dbReference type="Gene3D" id="3.40.50.720">
    <property type="entry name" value="NAD(P)-binding Rossmann-like Domain"/>
    <property type="match status" value="1"/>
</dbReference>
<dbReference type="InterPro" id="IPR008927">
    <property type="entry name" value="6-PGluconate_DH-like_C_sf"/>
</dbReference>
<dbReference type="InterPro" id="IPR013328">
    <property type="entry name" value="6PGD_dom2"/>
</dbReference>
<dbReference type="InterPro" id="IPR050988">
    <property type="entry name" value="Mannitol_DH/Oxidoreductase"/>
</dbReference>
<dbReference type="InterPro" id="IPR013118">
    <property type="entry name" value="Mannitol_DH_C"/>
</dbReference>
<dbReference type="InterPro" id="IPR013131">
    <property type="entry name" value="Mannitol_DH_N"/>
</dbReference>
<dbReference type="InterPro" id="IPR036291">
    <property type="entry name" value="NAD(P)-bd_dom_sf"/>
</dbReference>
<dbReference type="PANTHER" id="PTHR43362:SF1">
    <property type="entry name" value="MANNITOL DEHYDROGENASE 2-RELATED"/>
    <property type="match status" value="1"/>
</dbReference>
<dbReference type="PANTHER" id="PTHR43362">
    <property type="entry name" value="MANNITOL DEHYDROGENASE DSF1-RELATED"/>
    <property type="match status" value="1"/>
</dbReference>
<dbReference type="Pfam" id="PF01232">
    <property type="entry name" value="Mannitol_dh"/>
    <property type="match status" value="1"/>
</dbReference>
<dbReference type="Pfam" id="PF08125">
    <property type="entry name" value="Mannitol_dh_C"/>
    <property type="match status" value="1"/>
</dbReference>
<dbReference type="SUPFAM" id="SSF48179">
    <property type="entry name" value="6-phosphogluconate dehydrogenase C-terminal domain-like"/>
    <property type="match status" value="1"/>
</dbReference>
<dbReference type="SUPFAM" id="SSF51735">
    <property type="entry name" value="NAD(P)-binding Rossmann-fold domains"/>
    <property type="match status" value="1"/>
</dbReference>
<protein>
    <recommendedName>
        <fullName evidence="4">D-mannonate oxidoreductase</fullName>
        <ecNumber evidence="2">1.1.1.57</ecNumber>
    </recommendedName>
    <alternativeName>
        <fullName evidence="4">Fructuronate reductase</fullName>
    </alternativeName>
    <alternativeName>
        <fullName evidence="3">Mannonate dehydrogenase</fullName>
    </alternativeName>
</protein>
<reference key="1">
    <citation type="journal article" date="1999" name="Nature">
        <title>Evidence for lateral gene transfer between Archaea and Bacteria from genome sequence of Thermotoga maritima.</title>
        <authorList>
            <person name="Nelson K.E."/>
            <person name="Clayton R.A."/>
            <person name="Gill S.R."/>
            <person name="Gwinn M.L."/>
            <person name="Dodson R.J."/>
            <person name="Haft D.H."/>
            <person name="Hickey E.K."/>
            <person name="Peterson J.D."/>
            <person name="Nelson W.C."/>
            <person name="Ketchum K.A."/>
            <person name="McDonald L.A."/>
            <person name="Utterback T.R."/>
            <person name="Malek J.A."/>
            <person name="Linher K.D."/>
            <person name="Garrett M.M."/>
            <person name="Stewart A.M."/>
            <person name="Cotton M.D."/>
            <person name="Pratt M.S."/>
            <person name="Phillips C.A."/>
            <person name="Richardson D.L."/>
            <person name="Heidelberg J.F."/>
            <person name="Sutton G.G."/>
            <person name="Fleischmann R.D."/>
            <person name="Eisen J.A."/>
            <person name="White O."/>
            <person name="Salzberg S.L."/>
            <person name="Smith H.O."/>
            <person name="Venter J.C."/>
            <person name="Fraser C.M."/>
        </authorList>
    </citation>
    <scope>NUCLEOTIDE SEQUENCE [LARGE SCALE GENOMIC DNA]</scope>
    <source>
        <strain>ATCC 43589 / DSM 3109 / JCM 10099 / NBRC 100826 / MSB8</strain>
    </source>
</reference>
<reference key="2">
    <citation type="journal article" date="2013" name="PLoS Genet.">
        <title>The genome organization of Thermotoga maritima reflects its lifestyle.</title>
        <authorList>
            <person name="Latif H."/>
            <person name="Lerman J.A."/>
            <person name="Portnoy V.A."/>
            <person name="Tarasova Y."/>
            <person name="Nagarajan H."/>
            <person name="Schrimpe-Rutledge A.C."/>
            <person name="Smith R.D."/>
            <person name="Adkins J.N."/>
            <person name="Lee D.H."/>
            <person name="Qiu Y."/>
            <person name="Zengler K."/>
        </authorList>
    </citation>
    <scope>NUCLEOTIDE SEQUENCE [LARGE SCALE GENOMIC DNA]</scope>
    <source>
        <strain>ATCC 43589 / DSM 3109 / JCM 10099 / NBRC 100826 / MSB8</strain>
    </source>
</reference>
<reference key="3">
    <citation type="journal article" date="2012" name="Environ. Microbiol.">
        <title>Tagaturonate-fructuronate epimerase UxaE, a novel enzyme in the hexuronate catabolic network in Thermotoga maritima.</title>
        <authorList>
            <person name="Rodionova I.A."/>
            <person name="Scott D.A."/>
            <person name="Grishin N.V."/>
            <person name="Osterman A.L."/>
            <person name="Rodionov D.A."/>
        </authorList>
    </citation>
    <scope>FUNCTION</scope>
    <scope>CATALYTIC ACTIVITY</scope>
    <scope>BIOPHYSICOCHEMICAL PROPERTIES</scope>
</reference>
<proteinExistence type="evidence at protein level"/>
<evidence type="ECO:0000250" key="1"/>
<evidence type="ECO:0000269" key="2">
    <source>
    </source>
</evidence>
<evidence type="ECO:0000303" key="3">
    <source>
    </source>
</evidence>
<evidence type="ECO:0000305" key="4"/>
<evidence type="ECO:0000312" key="5">
    <source>
        <dbReference type="EMBL" id="AAD35162.1"/>
    </source>
</evidence>
<evidence type="ECO:0000312" key="6">
    <source>
        <dbReference type="EMBL" id="AGL48991.1"/>
    </source>
</evidence>
<feature type="chain" id="PRO_0000449570" description="D-mannonate oxidoreductase">
    <location>
        <begin position="1"/>
        <end position="539"/>
    </location>
</feature>
<feature type="binding site" evidence="1">
    <location>
        <begin position="39"/>
        <end position="50"/>
    </location>
    <ligand>
        <name>NAD(+)</name>
        <dbReference type="ChEBI" id="CHEBI:57540"/>
    </ligand>
</feature>
<sequence length="539" mass="61432">MRLNRETIKDRAAWEKIGVRPPYFDLDEVEKNTKEQPKWVHFGGGNIFRGFVAAVLQNLLEEGKEDTGINVIELFDYEVIDKVYKPYDNLSIAVTIKPDGDFEKRIIASVMEALKGDPSHPDWERAKEIFRNPSLQLASLTITEKGYNIEDQAGNLFPQVMEDMKNGPVSPQTSMGKVAALLYERFKAGRLPIALLSLDNFSRNGEKLYSSVKRISEEWVKSGLVEKDFIDYLEKDVAFPWSMIDKIVPGPSEFIKEHLEKLGIEGMEIFVTSKRTHIAPFVNMEWAQYLVIEDSFPNGRPKLEGADRNVFLTDRETVEKAERMKVTTCLNPLHTALAIFGCLLGYKKIADEMKDPLLKKLVEGVGEEGIKVVVDPGIINPREFLNEVINIRLPNPYLPDTPQRIATDTSQKMPIRFGETIKAYHERPDLDPRNLKYIPLVIAGWCRYLMGIDDEGREMQLSPDPLLENLRSYVSKIKFGDPESTDDHLKPILSSQQLFRVNLYEVGLGEKIEELFKKMITGPRAVRKTLEEVVGREDG</sequence>
<name>UXUB_THEMA</name>
<comment type="function">
    <text evidence="2">Catalyzes the reduction of D-fructuronate (D-FruA) to D-mannonate (D-ManA).</text>
</comment>
<comment type="catalytic activity">
    <reaction evidence="2">
        <text>D-mannonate + NAD(+) = keto-D-fructuronate + NADH + H(+)</text>
        <dbReference type="Rhea" id="RHEA:15729"/>
        <dbReference type="ChEBI" id="CHEBI:15378"/>
        <dbReference type="ChEBI" id="CHEBI:17767"/>
        <dbReference type="ChEBI" id="CHEBI:57540"/>
        <dbReference type="ChEBI" id="CHEBI:57945"/>
        <dbReference type="ChEBI" id="CHEBI:59881"/>
        <dbReference type="EC" id="1.1.1.57"/>
    </reaction>
</comment>
<comment type="biophysicochemical properties">
    <kinetics>
        <KM evidence="2">0.63 mM for D-mannonate</KM>
        <text evidence="2">kcat is 4.2 sec(-1) with D-mannonate as substrate.</text>
    </kinetics>
</comment>
<comment type="pathway">
    <text evidence="4">Carbohydrate metabolism.</text>
</comment>
<comment type="similarity">
    <text evidence="4">Belongs to the mannitol dehydrogenase family. UxuB subfamily.</text>
</comment>
<gene>
    <name evidence="3" type="primary">uxuB</name>
    <name evidence="5" type="ordered locus">TM_0068</name>
    <name evidence="6" type="ORF">Tmari_0065</name>
</gene>
<organism>
    <name type="scientific">Thermotoga maritima (strain ATCC 43589 / DSM 3109 / JCM 10099 / NBRC 100826 / MSB8)</name>
    <dbReference type="NCBI Taxonomy" id="243274"/>
    <lineage>
        <taxon>Bacteria</taxon>
        <taxon>Thermotogati</taxon>
        <taxon>Thermotogota</taxon>
        <taxon>Thermotogae</taxon>
        <taxon>Thermotogales</taxon>
        <taxon>Thermotogaceae</taxon>
        <taxon>Thermotoga</taxon>
    </lineage>
</organism>
<accession>Q9WXS3</accession>
<accession>G4FGY3</accession>
<accession>R4NP83</accession>
<keyword id="KW-0520">NAD</keyword>
<keyword id="KW-0560">Oxidoreductase</keyword>
<keyword id="KW-1185">Reference proteome</keyword>